<reference key="1">
    <citation type="submission" date="2009-06" db="EMBL/GenBank/DDBJ databases">
        <title>Complete sequence of Thermotogales bacterium TBF 19.5.1.</title>
        <authorList>
            <consortium name="US DOE Joint Genome Institute"/>
            <person name="Lucas S."/>
            <person name="Copeland A."/>
            <person name="Lapidus A."/>
            <person name="Glavina del Rio T."/>
            <person name="Tice H."/>
            <person name="Bruce D."/>
            <person name="Goodwin L."/>
            <person name="Pitluck S."/>
            <person name="Chertkov O."/>
            <person name="Brettin T."/>
            <person name="Detter J.C."/>
            <person name="Han C."/>
            <person name="Schmutz J."/>
            <person name="Larimer F."/>
            <person name="Land M."/>
            <person name="Hauser L."/>
            <person name="Kyrpides N."/>
            <person name="Ovchinnikova G."/>
            <person name="Noll K."/>
        </authorList>
    </citation>
    <scope>NUCLEOTIDE SEQUENCE [LARGE SCALE GENOMIC DNA]</scope>
    <source>
        <strain>ATCC BAA-1733 / DSM 21960 / TBF 19.5.1</strain>
    </source>
</reference>
<protein>
    <recommendedName>
        <fullName evidence="1">Large ribosomal subunit protein bL19</fullName>
    </recommendedName>
    <alternativeName>
        <fullName evidence="2">50S ribosomal protein L19</fullName>
    </alternativeName>
</protein>
<gene>
    <name evidence="1" type="primary">rplS</name>
    <name type="ordered locus">Kole_1466</name>
</gene>
<organism>
    <name type="scientific">Kosmotoga olearia (strain ATCC BAA-1733 / DSM 21960 / TBF 19.5.1)</name>
    <dbReference type="NCBI Taxonomy" id="521045"/>
    <lineage>
        <taxon>Bacteria</taxon>
        <taxon>Thermotogati</taxon>
        <taxon>Thermotogota</taxon>
        <taxon>Thermotogae</taxon>
        <taxon>Kosmotogales</taxon>
        <taxon>Kosmotogaceae</taxon>
        <taxon>Kosmotoga</taxon>
    </lineage>
</organism>
<dbReference type="EMBL" id="CP001634">
    <property type="protein sequence ID" value="ACR80158.1"/>
    <property type="molecule type" value="Genomic_DNA"/>
</dbReference>
<dbReference type="RefSeq" id="WP_015868805.1">
    <property type="nucleotide sequence ID" value="NC_012785.1"/>
</dbReference>
<dbReference type="SMR" id="C5CEB8"/>
<dbReference type="STRING" id="521045.Kole_1466"/>
<dbReference type="KEGG" id="kol:Kole_1466"/>
<dbReference type="eggNOG" id="COG0335">
    <property type="taxonomic scope" value="Bacteria"/>
</dbReference>
<dbReference type="HOGENOM" id="CLU_103507_2_1_0"/>
<dbReference type="OrthoDB" id="9803541at2"/>
<dbReference type="Proteomes" id="UP000002382">
    <property type="component" value="Chromosome"/>
</dbReference>
<dbReference type="GO" id="GO:0022625">
    <property type="term" value="C:cytosolic large ribosomal subunit"/>
    <property type="evidence" value="ECO:0007669"/>
    <property type="project" value="TreeGrafter"/>
</dbReference>
<dbReference type="GO" id="GO:0003735">
    <property type="term" value="F:structural constituent of ribosome"/>
    <property type="evidence" value="ECO:0007669"/>
    <property type="project" value="InterPro"/>
</dbReference>
<dbReference type="GO" id="GO:0006412">
    <property type="term" value="P:translation"/>
    <property type="evidence" value="ECO:0007669"/>
    <property type="project" value="UniProtKB-UniRule"/>
</dbReference>
<dbReference type="FunFam" id="2.30.30.790:FF:000001">
    <property type="entry name" value="50S ribosomal protein L19"/>
    <property type="match status" value="1"/>
</dbReference>
<dbReference type="Gene3D" id="2.30.30.790">
    <property type="match status" value="1"/>
</dbReference>
<dbReference type="HAMAP" id="MF_00402">
    <property type="entry name" value="Ribosomal_bL19"/>
    <property type="match status" value="1"/>
</dbReference>
<dbReference type="InterPro" id="IPR001857">
    <property type="entry name" value="Ribosomal_bL19"/>
</dbReference>
<dbReference type="InterPro" id="IPR038657">
    <property type="entry name" value="Ribosomal_bL19_sf"/>
</dbReference>
<dbReference type="InterPro" id="IPR008991">
    <property type="entry name" value="Translation_prot_SH3-like_sf"/>
</dbReference>
<dbReference type="NCBIfam" id="TIGR01024">
    <property type="entry name" value="rplS_bact"/>
    <property type="match status" value="1"/>
</dbReference>
<dbReference type="PANTHER" id="PTHR15680:SF9">
    <property type="entry name" value="LARGE RIBOSOMAL SUBUNIT PROTEIN BL19M"/>
    <property type="match status" value="1"/>
</dbReference>
<dbReference type="PANTHER" id="PTHR15680">
    <property type="entry name" value="RIBOSOMAL PROTEIN L19"/>
    <property type="match status" value="1"/>
</dbReference>
<dbReference type="Pfam" id="PF01245">
    <property type="entry name" value="Ribosomal_L19"/>
    <property type="match status" value="1"/>
</dbReference>
<dbReference type="PIRSF" id="PIRSF002191">
    <property type="entry name" value="Ribosomal_L19"/>
    <property type="match status" value="1"/>
</dbReference>
<dbReference type="PRINTS" id="PR00061">
    <property type="entry name" value="RIBOSOMALL19"/>
</dbReference>
<dbReference type="SUPFAM" id="SSF50104">
    <property type="entry name" value="Translation proteins SH3-like domain"/>
    <property type="match status" value="1"/>
</dbReference>
<sequence>MDQYIRAIESQYIRKDFPEFRPGDTVRVYVKVREGNRERTQAFEGIVIKIRGGGVGKTFTVRRIGAGGIGVERIFPFASPAVEKVQVLRKGKVRRAKLYYVRNIRGKIRIKERRD</sequence>
<proteinExistence type="inferred from homology"/>
<name>RL19_KOSOT</name>
<evidence type="ECO:0000255" key="1">
    <source>
        <dbReference type="HAMAP-Rule" id="MF_00402"/>
    </source>
</evidence>
<evidence type="ECO:0000305" key="2"/>
<feature type="chain" id="PRO_1000205894" description="Large ribosomal subunit protein bL19">
    <location>
        <begin position="1"/>
        <end position="115"/>
    </location>
</feature>
<comment type="function">
    <text evidence="1">This protein is located at the 30S-50S ribosomal subunit interface and may play a role in the structure and function of the aminoacyl-tRNA binding site.</text>
</comment>
<comment type="similarity">
    <text evidence="1">Belongs to the bacterial ribosomal protein bL19 family.</text>
</comment>
<keyword id="KW-1185">Reference proteome</keyword>
<keyword id="KW-0687">Ribonucleoprotein</keyword>
<keyword id="KW-0689">Ribosomal protein</keyword>
<accession>C5CEB8</accession>